<organism>
    <name type="scientific">Chlorobaculum parvum (strain DSM 263 / NCIMB 8327)</name>
    <name type="common">Chlorobium vibrioforme subsp. thiosulfatophilum</name>
    <dbReference type="NCBI Taxonomy" id="517417"/>
    <lineage>
        <taxon>Bacteria</taxon>
        <taxon>Pseudomonadati</taxon>
        <taxon>Chlorobiota</taxon>
        <taxon>Chlorobiia</taxon>
        <taxon>Chlorobiales</taxon>
        <taxon>Chlorobiaceae</taxon>
        <taxon>Chlorobaculum</taxon>
    </lineage>
</organism>
<reference key="1">
    <citation type="submission" date="2008-06" db="EMBL/GenBank/DDBJ databases">
        <title>Complete sequence of Chlorobaculum parvum NCIB 8327.</title>
        <authorList>
            <consortium name="US DOE Joint Genome Institute"/>
            <person name="Lucas S."/>
            <person name="Copeland A."/>
            <person name="Lapidus A."/>
            <person name="Glavina del Rio T."/>
            <person name="Dalin E."/>
            <person name="Tice H."/>
            <person name="Bruce D."/>
            <person name="Goodwin L."/>
            <person name="Pitluck S."/>
            <person name="Schmutz J."/>
            <person name="Larimer F."/>
            <person name="Land M."/>
            <person name="Hauser L."/>
            <person name="Kyrpides N."/>
            <person name="Mikhailova N."/>
            <person name="Zhao F."/>
            <person name="Li T."/>
            <person name="Liu Z."/>
            <person name="Overmann J."/>
            <person name="Bryant D.A."/>
            <person name="Richardson P."/>
        </authorList>
    </citation>
    <scope>NUCLEOTIDE SEQUENCE [LARGE SCALE GENOMIC DNA]</scope>
    <source>
        <strain>DSM 263 / NCIMB 8327</strain>
    </source>
</reference>
<accession>B3QR56</accession>
<dbReference type="EMBL" id="CP001099">
    <property type="protein sequence ID" value="ACF10599.1"/>
    <property type="molecule type" value="Genomic_DNA"/>
</dbReference>
<dbReference type="RefSeq" id="WP_012501434.1">
    <property type="nucleotide sequence ID" value="NC_011027.1"/>
</dbReference>
<dbReference type="SMR" id="B3QR56"/>
<dbReference type="STRING" id="517417.Cpar_0172"/>
<dbReference type="KEGG" id="cpc:Cpar_0172"/>
<dbReference type="eggNOG" id="COG0048">
    <property type="taxonomic scope" value="Bacteria"/>
</dbReference>
<dbReference type="HOGENOM" id="CLU_104295_1_2_10"/>
<dbReference type="OrthoDB" id="9802366at2"/>
<dbReference type="Proteomes" id="UP000008811">
    <property type="component" value="Chromosome"/>
</dbReference>
<dbReference type="GO" id="GO:0015935">
    <property type="term" value="C:small ribosomal subunit"/>
    <property type="evidence" value="ECO:0007669"/>
    <property type="project" value="InterPro"/>
</dbReference>
<dbReference type="GO" id="GO:0019843">
    <property type="term" value="F:rRNA binding"/>
    <property type="evidence" value="ECO:0007669"/>
    <property type="project" value="UniProtKB-UniRule"/>
</dbReference>
<dbReference type="GO" id="GO:0003735">
    <property type="term" value="F:structural constituent of ribosome"/>
    <property type="evidence" value="ECO:0007669"/>
    <property type="project" value="InterPro"/>
</dbReference>
<dbReference type="GO" id="GO:0000049">
    <property type="term" value="F:tRNA binding"/>
    <property type="evidence" value="ECO:0007669"/>
    <property type="project" value="UniProtKB-UniRule"/>
</dbReference>
<dbReference type="GO" id="GO:0006412">
    <property type="term" value="P:translation"/>
    <property type="evidence" value="ECO:0007669"/>
    <property type="project" value="UniProtKB-UniRule"/>
</dbReference>
<dbReference type="CDD" id="cd03368">
    <property type="entry name" value="Ribosomal_S12"/>
    <property type="match status" value="1"/>
</dbReference>
<dbReference type="FunFam" id="2.40.50.140:FF:000001">
    <property type="entry name" value="30S ribosomal protein S12"/>
    <property type="match status" value="1"/>
</dbReference>
<dbReference type="Gene3D" id="2.40.50.140">
    <property type="entry name" value="Nucleic acid-binding proteins"/>
    <property type="match status" value="1"/>
</dbReference>
<dbReference type="HAMAP" id="MF_00403_B">
    <property type="entry name" value="Ribosomal_uS12_B"/>
    <property type="match status" value="1"/>
</dbReference>
<dbReference type="InterPro" id="IPR012340">
    <property type="entry name" value="NA-bd_OB-fold"/>
</dbReference>
<dbReference type="InterPro" id="IPR006032">
    <property type="entry name" value="Ribosomal_uS12"/>
</dbReference>
<dbReference type="InterPro" id="IPR005679">
    <property type="entry name" value="Ribosomal_uS12_bac"/>
</dbReference>
<dbReference type="NCBIfam" id="TIGR00981">
    <property type="entry name" value="rpsL_bact"/>
    <property type="match status" value="1"/>
</dbReference>
<dbReference type="PANTHER" id="PTHR11652">
    <property type="entry name" value="30S RIBOSOMAL PROTEIN S12 FAMILY MEMBER"/>
    <property type="match status" value="1"/>
</dbReference>
<dbReference type="Pfam" id="PF00164">
    <property type="entry name" value="Ribosom_S12_S23"/>
    <property type="match status" value="1"/>
</dbReference>
<dbReference type="PIRSF" id="PIRSF002133">
    <property type="entry name" value="Ribosomal_S12/S23"/>
    <property type="match status" value="1"/>
</dbReference>
<dbReference type="PRINTS" id="PR01034">
    <property type="entry name" value="RIBOSOMALS12"/>
</dbReference>
<dbReference type="SUPFAM" id="SSF50249">
    <property type="entry name" value="Nucleic acid-binding proteins"/>
    <property type="match status" value="1"/>
</dbReference>
<dbReference type="PROSITE" id="PS00055">
    <property type="entry name" value="RIBOSOMAL_S12"/>
    <property type="match status" value="1"/>
</dbReference>
<evidence type="ECO:0000250" key="1"/>
<evidence type="ECO:0000255" key="2">
    <source>
        <dbReference type="HAMAP-Rule" id="MF_00403"/>
    </source>
</evidence>
<evidence type="ECO:0000256" key="3">
    <source>
        <dbReference type="SAM" id="MobiDB-lite"/>
    </source>
</evidence>
<evidence type="ECO:0000305" key="4"/>
<protein>
    <recommendedName>
        <fullName evidence="2">Small ribosomal subunit protein uS12</fullName>
    </recommendedName>
    <alternativeName>
        <fullName evidence="4">30S ribosomal protein S12</fullName>
    </alternativeName>
</protein>
<name>RS12_CHLP8</name>
<keyword id="KW-0488">Methylation</keyword>
<keyword id="KW-0687">Ribonucleoprotein</keyword>
<keyword id="KW-0689">Ribosomal protein</keyword>
<keyword id="KW-0694">RNA-binding</keyword>
<keyword id="KW-0699">rRNA-binding</keyword>
<keyword id="KW-0820">tRNA-binding</keyword>
<sequence length="129" mass="14169">MPTIQQLIRHGRSMKASKTASPALEKCPQKRGVCTRVYTTTPKKPNSALRKVARVRLSNKIEVTAYIPGEGHNLQEHSIVLIRGGRVKDLPGVRYHIVRGSLDTSGVADRKQSRSKYGAKQPKAGAAKK</sequence>
<feature type="chain" id="PRO_1000194141" description="Small ribosomal subunit protein uS12">
    <location>
        <begin position="1"/>
        <end position="129"/>
    </location>
</feature>
<feature type="region of interest" description="Disordered" evidence="3">
    <location>
        <begin position="101"/>
        <end position="129"/>
    </location>
</feature>
<feature type="compositionally biased region" description="Low complexity" evidence="3">
    <location>
        <begin position="116"/>
        <end position="129"/>
    </location>
</feature>
<feature type="modified residue" description="3-methylthioaspartic acid" evidence="1">
    <location>
        <position position="89"/>
    </location>
</feature>
<comment type="function">
    <text evidence="2">With S4 and S5 plays an important role in translational accuracy.</text>
</comment>
<comment type="function">
    <text evidence="2">Interacts with and stabilizes bases of the 16S rRNA that are involved in tRNA selection in the A site and with the mRNA backbone. Located at the interface of the 30S and 50S subunits, it traverses the body of the 30S subunit contacting proteins on the other side and probably holding the rRNA structure together. The combined cluster of proteins S8, S12 and S17 appears to hold together the shoulder and platform of the 30S subunit.</text>
</comment>
<comment type="subunit">
    <text evidence="2">Part of the 30S ribosomal subunit. Contacts proteins S8 and S17. May interact with IF1 in the 30S initiation complex.</text>
</comment>
<comment type="similarity">
    <text evidence="2">Belongs to the universal ribosomal protein uS12 family.</text>
</comment>
<proteinExistence type="inferred from homology"/>
<gene>
    <name evidence="2" type="primary">rpsL</name>
    <name type="ordered locus">Cpar_0172</name>
</gene>